<evidence type="ECO:0000255" key="1">
    <source>
        <dbReference type="HAMAP-Rule" id="MF_00113"/>
    </source>
</evidence>
<name>QUEA_METS4</name>
<accession>B0U9V5</accession>
<gene>
    <name evidence="1" type="primary">queA</name>
    <name type="ordered locus">M446_5515</name>
</gene>
<protein>
    <recommendedName>
        <fullName evidence="1">S-adenosylmethionine:tRNA ribosyltransferase-isomerase</fullName>
        <ecNumber evidence="1">2.4.99.17</ecNumber>
    </recommendedName>
    <alternativeName>
        <fullName evidence="1">Queuosine biosynthesis protein QueA</fullName>
    </alternativeName>
</protein>
<reference key="1">
    <citation type="submission" date="2008-02" db="EMBL/GenBank/DDBJ databases">
        <title>Complete sequence of chromosome of Methylobacterium sp. 4-46.</title>
        <authorList>
            <consortium name="US DOE Joint Genome Institute"/>
            <person name="Copeland A."/>
            <person name="Lucas S."/>
            <person name="Lapidus A."/>
            <person name="Glavina del Rio T."/>
            <person name="Dalin E."/>
            <person name="Tice H."/>
            <person name="Bruce D."/>
            <person name="Goodwin L."/>
            <person name="Pitluck S."/>
            <person name="Chertkov O."/>
            <person name="Brettin T."/>
            <person name="Detter J.C."/>
            <person name="Han C."/>
            <person name="Kuske C.R."/>
            <person name="Schmutz J."/>
            <person name="Larimer F."/>
            <person name="Land M."/>
            <person name="Hauser L."/>
            <person name="Kyrpides N."/>
            <person name="Ivanova N."/>
            <person name="Marx C.J."/>
            <person name="Richardson P."/>
        </authorList>
    </citation>
    <scope>NUCLEOTIDE SEQUENCE [LARGE SCALE GENOMIC DNA]</scope>
    <source>
        <strain>4-46</strain>
    </source>
</reference>
<organism>
    <name type="scientific">Methylobacterium sp. (strain 4-46)</name>
    <dbReference type="NCBI Taxonomy" id="426117"/>
    <lineage>
        <taxon>Bacteria</taxon>
        <taxon>Pseudomonadati</taxon>
        <taxon>Pseudomonadota</taxon>
        <taxon>Alphaproteobacteria</taxon>
        <taxon>Hyphomicrobiales</taxon>
        <taxon>Methylobacteriaceae</taxon>
        <taxon>Methylobacterium</taxon>
    </lineage>
</organism>
<comment type="function">
    <text evidence="1">Transfers and isomerizes the ribose moiety from AdoMet to the 7-aminomethyl group of 7-deazaguanine (preQ1-tRNA) to give epoxyqueuosine (oQ-tRNA).</text>
</comment>
<comment type="catalytic activity">
    <reaction evidence="1">
        <text>7-aminomethyl-7-carbaguanosine(34) in tRNA + S-adenosyl-L-methionine = epoxyqueuosine(34) in tRNA + adenine + L-methionine + 2 H(+)</text>
        <dbReference type="Rhea" id="RHEA:32155"/>
        <dbReference type="Rhea" id="RHEA-COMP:10342"/>
        <dbReference type="Rhea" id="RHEA-COMP:18582"/>
        <dbReference type="ChEBI" id="CHEBI:15378"/>
        <dbReference type="ChEBI" id="CHEBI:16708"/>
        <dbReference type="ChEBI" id="CHEBI:57844"/>
        <dbReference type="ChEBI" id="CHEBI:59789"/>
        <dbReference type="ChEBI" id="CHEBI:82833"/>
        <dbReference type="ChEBI" id="CHEBI:194443"/>
        <dbReference type="EC" id="2.4.99.17"/>
    </reaction>
</comment>
<comment type="pathway">
    <text evidence="1">tRNA modification; tRNA-queuosine biosynthesis.</text>
</comment>
<comment type="subunit">
    <text evidence="1">Monomer.</text>
</comment>
<comment type="subcellular location">
    <subcellularLocation>
        <location evidence="1">Cytoplasm</location>
    </subcellularLocation>
</comment>
<comment type="similarity">
    <text evidence="1">Belongs to the QueA family.</text>
</comment>
<dbReference type="EC" id="2.4.99.17" evidence="1"/>
<dbReference type="EMBL" id="CP000943">
    <property type="protein sequence ID" value="ACA19830.1"/>
    <property type="molecule type" value="Genomic_DNA"/>
</dbReference>
<dbReference type="RefSeq" id="WP_012335215.1">
    <property type="nucleotide sequence ID" value="NC_010511.1"/>
</dbReference>
<dbReference type="SMR" id="B0U9V5"/>
<dbReference type="STRING" id="426117.M446_5515"/>
<dbReference type="KEGG" id="met:M446_5515"/>
<dbReference type="eggNOG" id="COG0809">
    <property type="taxonomic scope" value="Bacteria"/>
</dbReference>
<dbReference type="HOGENOM" id="CLU_039110_1_1_5"/>
<dbReference type="UniPathway" id="UPA00392"/>
<dbReference type="GO" id="GO:0005737">
    <property type="term" value="C:cytoplasm"/>
    <property type="evidence" value="ECO:0007669"/>
    <property type="project" value="UniProtKB-SubCell"/>
</dbReference>
<dbReference type="GO" id="GO:0051075">
    <property type="term" value="F:S-adenosylmethionine:tRNA ribosyltransferase-isomerase activity"/>
    <property type="evidence" value="ECO:0007669"/>
    <property type="project" value="UniProtKB-EC"/>
</dbReference>
<dbReference type="GO" id="GO:0008616">
    <property type="term" value="P:queuosine biosynthetic process"/>
    <property type="evidence" value="ECO:0007669"/>
    <property type="project" value="UniProtKB-UniRule"/>
</dbReference>
<dbReference type="GO" id="GO:0002099">
    <property type="term" value="P:tRNA wobble guanine modification"/>
    <property type="evidence" value="ECO:0007669"/>
    <property type="project" value="TreeGrafter"/>
</dbReference>
<dbReference type="FunFam" id="3.40.1780.10:FF:000001">
    <property type="entry name" value="S-adenosylmethionine:tRNA ribosyltransferase-isomerase"/>
    <property type="match status" value="1"/>
</dbReference>
<dbReference type="Gene3D" id="2.40.10.240">
    <property type="entry name" value="QueA-like"/>
    <property type="match status" value="1"/>
</dbReference>
<dbReference type="Gene3D" id="3.40.1780.10">
    <property type="entry name" value="QueA-like"/>
    <property type="match status" value="2"/>
</dbReference>
<dbReference type="HAMAP" id="MF_00113">
    <property type="entry name" value="QueA"/>
    <property type="match status" value="1"/>
</dbReference>
<dbReference type="InterPro" id="IPR003699">
    <property type="entry name" value="QueA"/>
</dbReference>
<dbReference type="InterPro" id="IPR042118">
    <property type="entry name" value="QueA_dom1"/>
</dbReference>
<dbReference type="InterPro" id="IPR042119">
    <property type="entry name" value="QueA_dom2"/>
</dbReference>
<dbReference type="InterPro" id="IPR036100">
    <property type="entry name" value="QueA_sf"/>
</dbReference>
<dbReference type="NCBIfam" id="NF001140">
    <property type="entry name" value="PRK00147.1"/>
    <property type="match status" value="1"/>
</dbReference>
<dbReference type="NCBIfam" id="TIGR00113">
    <property type="entry name" value="queA"/>
    <property type="match status" value="1"/>
</dbReference>
<dbReference type="PANTHER" id="PTHR30307">
    <property type="entry name" value="S-ADENOSYLMETHIONINE:TRNA RIBOSYLTRANSFERASE-ISOMERASE"/>
    <property type="match status" value="1"/>
</dbReference>
<dbReference type="PANTHER" id="PTHR30307:SF0">
    <property type="entry name" value="S-ADENOSYLMETHIONINE:TRNA RIBOSYLTRANSFERASE-ISOMERASE"/>
    <property type="match status" value="1"/>
</dbReference>
<dbReference type="Pfam" id="PF02547">
    <property type="entry name" value="Queuosine_synth"/>
    <property type="match status" value="1"/>
</dbReference>
<dbReference type="SUPFAM" id="SSF111337">
    <property type="entry name" value="QueA-like"/>
    <property type="match status" value="1"/>
</dbReference>
<feature type="chain" id="PRO_1000094791" description="S-adenosylmethionine:tRNA ribosyltransferase-isomerase">
    <location>
        <begin position="1"/>
        <end position="362"/>
    </location>
</feature>
<proteinExistence type="inferred from homology"/>
<keyword id="KW-0963">Cytoplasm</keyword>
<keyword id="KW-0671">Queuosine biosynthesis</keyword>
<keyword id="KW-0949">S-adenosyl-L-methionine</keyword>
<keyword id="KW-0808">Transferase</keyword>
<sequence length="362" mass="39109">MRVDLFDFDLPEALIALRPVEPRDAARLLRVAPGHPLAEARVRDLPALLRPGDCLVFNDTRVIPARLRGLRARPDGSSVRVEAMLHRREGPDCWRAFARPGKRLREGDRIRFGSGRDGSACDLGHLDATVAARGEEGEITLAFDLAGAFLDEAVARLGELPLPPYIAGRRPADARDAADYQTVYAREPGAVAAPTAGLHFTPDLLARLGAAGIGEARLTLHVGAGTFLPVKAQDTEAHRMHAETGEITPGTAARLNRARAEGGRIVAVGTTSLRLLESAAEPDGTIRPFAGATDIFITPGYRFRAVDVLMTNFHLPRSTLFMLVSAFAGLETMRAAYAHAVAQGYRFYSYGDASLLFRAEGR</sequence>